<dbReference type="EC" id="4.2.1.11"/>
<dbReference type="EMBL" id="Z75301">
    <property type="protein sequence ID" value="CAA99725.1"/>
    <property type="molecule type" value="Genomic_DNA"/>
</dbReference>
<dbReference type="EMBL" id="Z75302">
    <property type="protein sequence ID" value="CAA99728.1"/>
    <property type="molecule type" value="Genomic_DNA"/>
</dbReference>
<dbReference type="EMBL" id="U23472">
    <property type="protein sequence ID" value="AAC48992.1"/>
    <property type="molecule type" value="Genomic_DNA"/>
</dbReference>
<dbReference type="EMBL" id="BK006948">
    <property type="protein sequence ID" value="DAA11151.1"/>
    <property type="molecule type" value="Genomic_DNA"/>
</dbReference>
<dbReference type="PIR" id="S67305">
    <property type="entry name" value="S67305"/>
</dbReference>
<dbReference type="RefSeq" id="NP_015038.1">
    <property type="nucleotide sequence ID" value="NM_001183813.1"/>
</dbReference>
<dbReference type="SMR" id="P0CX10"/>
<dbReference type="BioGRID" id="34773">
    <property type="interactions" value="122"/>
</dbReference>
<dbReference type="BioGRID" id="35934">
    <property type="interactions" value="9"/>
</dbReference>
<dbReference type="FunCoup" id="P0CX10">
    <property type="interactions" value="742"/>
</dbReference>
<dbReference type="IntAct" id="P0CX10">
    <property type="interactions" value="7"/>
</dbReference>
<dbReference type="MINT" id="P0CX10"/>
<dbReference type="STRING" id="4932.YOR393W"/>
<dbReference type="PaxDb" id="4932-YOR393W"/>
<dbReference type="PeptideAtlas" id="P0CX10"/>
<dbReference type="EnsemblFungi" id="YOR393W_mRNA">
    <property type="protein sequence ID" value="YOR393W"/>
    <property type="gene ID" value="YOR393W"/>
</dbReference>
<dbReference type="EnsemblFungi" id="YPL281C_mRNA">
    <property type="protein sequence ID" value="YPL281C"/>
    <property type="gene ID" value="YPL281C"/>
</dbReference>
<dbReference type="GeneID" id="854575"/>
<dbReference type="KEGG" id="sce:YOR393W"/>
<dbReference type="KEGG" id="sce:YPL281C"/>
<dbReference type="AGR" id="SGD:S000005920"/>
<dbReference type="SGD" id="S000005920">
    <property type="gene designation" value="ERR1"/>
</dbReference>
<dbReference type="VEuPathDB" id="FungiDB:YOR393W"/>
<dbReference type="VEuPathDB" id="FungiDB:YPL281C"/>
<dbReference type="eggNOG" id="KOG2670">
    <property type="taxonomic scope" value="Eukaryota"/>
</dbReference>
<dbReference type="HOGENOM" id="CLU_031223_0_0_1"/>
<dbReference type="InParanoid" id="P0CX10"/>
<dbReference type="OMA" id="VDICCSD"/>
<dbReference type="OrthoDB" id="1739814at2759"/>
<dbReference type="BioCyc" id="YEAST:YOR393W-MONOMER"/>
<dbReference type="Reactome" id="R-SCE-70171">
    <property type="pathway name" value="Glycolysis"/>
</dbReference>
<dbReference type="Reactome" id="R-SCE-70263">
    <property type="pathway name" value="Gluconeogenesis"/>
</dbReference>
<dbReference type="UniPathway" id="UPA00109">
    <property type="reaction ID" value="UER00187"/>
</dbReference>
<dbReference type="PRO" id="PR:P0CX10"/>
<dbReference type="Proteomes" id="UP000002311">
    <property type="component" value="Chromosome XV"/>
</dbReference>
<dbReference type="RNAct" id="P0CX10">
    <property type="molecule type" value="protein"/>
</dbReference>
<dbReference type="ExpressionAtlas" id="P0CX10">
    <property type="expression patterns" value="baseline and differential"/>
</dbReference>
<dbReference type="GO" id="GO:0000015">
    <property type="term" value="C:phosphopyruvate hydratase complex"/>
    <property type="evidence" value="ECO:0000318"/>
    <property type="project" value="GO_Central"/>
</dbReference>
<dbReference type="GO" id="GO:0000287">
    <property type="term" value="F:magnesium ion binding"/>
    <property type="evidence" value="ECO:0007669"/>
    <property type="project" value="InterPro"/>
</dbReference>
<dbReference type="GO" id="GO:0004634">
    <property type="term" value="F:phosphopyruvate hydratase activity"/>
    <property type="evidence" value="ECO:0000247"/>
    <property type="project" value="SGD"/>
</dbReference>
<dbReference type="GO" id="GO:0006096">
    <property type="term" value="P:glycolytic process"/>
    <property type="evidence" value="ECO:0000318"/>
    <property type="project" value="GO_Central"/>
</dbReference>
<dbReference type="CDD" id="cd03313">
    <property type="entry name" value="enolase"/>
    <property type="match status" value="1"/>
</dbReference>
<dbReference type="FunFam" id="3.30.390.10:FF:000001">
    <property type="entry name" value="Enolase"/>
    <property type="match status" value="1"/>
</dbReference>
<dbReference type="FunFam" id="3.20.20.120:FF:000002">
    <property type="entry name" value="Enolase 1"/>
    <property type="match status" value="1"/>
</dbReference>
<dbReference type="Gene3D" id="3.20.20.120">
    <property type="entry name" value="Enolase-like C-terminal domain"/>
    <property type="match status" value="1"/>
</dbReference>
<dbReference type="Gene3D" id="3.30.390.10">
    <property type="entry name" value="Enolase-like, N-terminal domain"/>
    <property type="match status" value="1"/>
</dbReference>
<dbReference type="HAMAP" id="MF_00318">
    <property type="entry name" value="Enolase"/>
    <property type="match status" value="1"/>
</dbReference>
<dbReference type="InterPro" id="IPR000941">
    <property type="entry name" value="Enolase"/>
</dbReference>
<dbReference type="InterPro" id="IPR036849">
    <property type="entry name" value="Enolase-like_C_sf"/>
</dbReference>
<dbReference type="InterPro" id="IPR029017">
    <property type="entry name" value="Enolase-like_N"/>
</dbReference>
<dbReference type="InterPro" id="IPR020810">
    <property type="entry name" value="Enolase_C"/>
</dbReference>
<dbReference type="InterPro" id="IPR020809">
    <property type="entry name" value="Enolase_CS"/>
</dbReference>
<dbReference type="InterPro" id="IPR020811">
    <property type="entry name" value="Enolase_N"/>
</dbReference>
<dbReference type="NCBIfam" id="TIGR01060">
    <property type="entry name" value="eno"/>
    <property type="match status" value="1"/>
</dbReference>
<dbReference type="PANTHER" id="PTHR11902">
    <property type="entry name" value="ENOLASE"/>
    <property type="match status" value="1"/>
</dbReference>
<dbReference type="PANTHER" id="PTHR11902:SF1">
    <property type="entry name" value="ENOLASE"/>
    <property type="match status" value="1"/>
</dbReference>
<dbReference type="Pfam" id="PF00113">
    <property type="entry name" value="Enolase_C"/>
    <property type="match status" value="1"/>
</dbReference>
<dbReference type="Pfam" id="PF03952">
    <property type="entry name" value="Enolase_N"/>
    <property type="match status" value="1"/>
</dbReference>
<dbReference type="PIRSF" id="PIRSF001400">
    <property type="entry name" value="Enolase"/>
    <property type="match status" value="1"/>
</dbReference>
<dbReference type="PRINTS" id="PR00148">
    <property type="entry name" value="ENOLASE"/>
</dbReference>
<dbReference type="SFLD" id="SFLDS00001">
    <property type="entry name" value="Enolase"/>
    <property type="match status" value="1"/>
</dbReference>
<dbReference type="SFLD" id="SFLDF00002">
    <property type="entry name" value="enolase"/>
    <property type="match status" value="1"/>
</dbReference>
<dbReference type="SMART" id="SM01192">
    <property type="entry name" value="Enolase_C"/>
    <property type="match status" value="1"/>
</dbReference>
<dbReference type="SMART" id="SM01193">
    <property type="entry name" value="Enolase_N"/>
    <property type="match status" value="1"/>
</dbReference>
<dbReference type="SUPFAM" id="SSF51604">
    <property type="entry name" value="Enolase C-terminal domain-like"/>
    <property type="match status" value="1"/>
</dbReference>
<dbReference type="SUPFAM" id="SSF54826">
    <property type="entry name" value="Enolase N-terminal domain-like"/>
    <property type="match status" value="1"/>
</dbReference>
<dbReference type="PROSITE" id="PS00164">
    <property type="entry name" value="ENOLASE"/>
    <property type="match status" value="1"/>
</dbReference>
<feature type="chain" id="PRO_0000134064" description="Enolase-related protein 1">
    <location>
        <begin position="1"/>
        <end position="437"/>
    </location>
</feature>
<feature type="active site" description="Proton donor" evidence="1">
    <location>
        <position position="212"/>
    </location>
</feature>
<feature type="active site" description="Proton acceptor" evidence="1">
    <location>
        <position position="346"/>
    </location>
</feature>
<feature type="binding site" evidence="1">
    <location>
        <position position="160"/>
    </location>
    <ligand>
        <name>substrate</name>
    </ligand>
</feature>
<feature type="binding site" evidence="1">
    <location>
        <position position="169"/>
    </location>
    <ligand>
        <name>substrate</name>
    </ligand>
</feature>
<feature type="binding site" evidence="1">
    <location>
        <position position="247"/>
    </location>
    <ligand>
        <name>Mg(2+)</name>
        <dbReference type="ChEBI" id="CHEBI:18420"/>
    </ligand>
</feature>
<feature type="binding site" evidence="1">
    <location>
        <position position="296"/>
    </location>
    <ligand>
        <name>Mg(2+)</name>
        <dbReference type="ChEBI" id="CHEBI:18420"/>
    </ligand>
</feature>
<feature type="binding site" evidence="1">
    <location>
        <position position="296"/>
    </location>
    <ligand>
        <name>substrate</name>
    </ligand>
</feature>
<feature type="binding site" evidence="1">
    <location>
        <position position="321"/>
    </location>
    <ligand>
        <name>Mg(2+)</name>
        <dbReference type="ChEBI" id="CHEBI:18420"/>
    </ligand>
</feature>
<feature type="binding site" evidence="1">
    <location>
        <position position="321"/>
    </location>
    <ligand>
        <name>substrate</name>
    </ligand>
</feature>
<feature type="binding site" evidence="1">
    <location>
        <begin position="373"/>
        <end position="376"/>
    </location>
    <ligand>
        <name>substrate</name>
    </ligand>
</feature>
<feature type="binding site" evidence="1">
    <location>
        <position position="397"/>
    </location>
    <ligand>
        <name>substrate</name>
    </ligand>
</feature>
<feature type="sequence conflict" description="In Ref. 3; AAC48992." evidence="2" ref="3">
    <original>E</original>
    <variation>K</variation>
    <location>
        <position position="231"/>
    </location>
</feature>
<organism>
    <name type="scientific">Saccharomyces cerevisiae (strain ATCC 204508 / S288c)</name>
    <name type="common">Baker's yeast</name>
    <dbReference type="NCBI Taxonomy" id="559292"/>
    <lineage>
        <taxon>Eukaryota</taxon>
        <taxon>Fungi</taxon>
        <taxon>Dikarya</taxon>
        <taxon>Ascomycota</taxon>
        <taxon>Saccharomycotina</taxon>
        <taxon>Saccharomycetes</taxon>
        <taxon>Saccharomycetales</taxon>
        <taxon>Saccharomycetaceae</taxon>
        <taxon>Saccharomyces</taxon>
    </lineage>
</organism>
<sequence length="437" mass="47328">MSITKVHARTVYDSRGNPTVEVEITTENGLFRAIVPSGASTGIHEAVELRDGNKSEWMGKGVTKAVSNVNSIIGPALIKSELCVTNQKGIDELMISLDGTSNKSRLGANAILGVSLCVARAAAAQKGITLYKYIAELADARQDPFVIPVPFFNVLNGGAHAGGSLAMQEFKIAPVGAQSFAEAMRMGSEVYHHLKILAKEQYGPSAGNVGDEGGVAPDIDTAEDALDMIVEAINICGYEGRVKVGIDSAPSVFYKDGKYDLNFKEPNSDPSHWLSPAQLAEYYHSLLKKYPIISLEDPYAEDDWSSWSAFLKTVNVQIIADDLTCTNKTRIARAIEEKCANTLLLKLNQIGTLTESIEAANQAFDAGWGVMISHRSGETEDPFIADLVVGLRCGQIKSGALSRSERLAKYNELLRIEEELGDDCIYAGHRFHDGNKL</sequence>
<accession>P0CX10</accession>
<accession>D6W385</accession>
<accession>Q12007</accession>
<accession>Q7LGJ4</accession>
<keyword id="KW-0324">Glycolysis</keyword>
<keyword id="KW-0456">Lyase</keyword>
<keyword id="KW-0460">Magnesium</keyword>
<keyword id="KW-0479">Metal-binding</keyword>
<keyword id="KW-1185">Reference proteome</keyword>
<gene>
    <name type="primary">ERR1</name>
    <name type="ordered locus">YOR393W</name>
</gene>
<proteinExistence type="inferred from homology"/>
<reference key="1">
    <citation type="journal article" date="1997" name="Nature">
        <title>The nucleotide sequence of Saccharomyces cerevisiae chromosome XV.</title>
        <authorList>
            <person name="Dujon B."/>
            <person name="Albermann K."/>
            <person name="Aldea M."/>
            <person name="Alexandraki D."/>
            <person name="Ansorge W."/>
            <person name="Arino J."/>
            <person name="Benes V."/>
            <person name="Bohn C."/>
            <person name="Bolotin-Fukuhara M."/>
            <person name="Bordonne R."/>
            <person name="Boyer J."/>
            <person name="Camasses A."/>
            <person name="Casamayor A."/>
            <person name="Casas C."/>
            <person name="Cheret G."/>
            <person name="Cziepluch C."/>
            <person name="Daignan-Fornier B."/>
            <person name="Dang V.-D."/>
            <person name="de Haan M."/>
            <person name="Delius H."/>
            <person name="Durand P."/>
            <person name="Fairhead C."/>
            <person name="Feldmann H."/>
            <person name="Gaillon L."/>
            <person name="Galisson F."/>
            <person name="Gamo F.-J."/>
            <person name="Gancedo C."/>
            <person name="Goffeau A."/>
            <person name="Goulding S.E."/>
            <person name="Grivell L.A."/>
            <person name="Habbig B."/>
            <person name="Hand N.J."/>
            <person name="Hani J."/>
            <person name="Hattenhorst U."/>
            <person name="Hebling U."/>
            <person name="Hernando Y."/>
            <person name="Herrero E."/>
            <person name="Heumann K."/>
            <person name="Hiesel R."/>
            <person name="Hilger F."/>
            <person name="Hofmann B."/>
            <person name="Hollenberg C.P."/>
            <person name="Hughes B."/>
            <person name="Jauniaux J.-C."/>
            <person name="Kalogeropoulos A."/>
            <person name="Katsoulou C."/>
            <person name="Kordes E."/>
            <person name="Lafuente M.J."/>
            <person name="Landt O."/>
            <person name="Louis E.J."/>
            <person name="Maarse A.C."/>
            <person name="Madania A."/>
            <person name="Mannhaupt G."/>
            <person name="Marck C."/>
            <person name="Martin R.P."/>
            <person name="Mewes H.-W."/>
            <person name="Michaux G."/>
            <person name="Paces V."/>
            <person name="Parle-McDermott A.G."/>
            <person name="Pearson B.M."/>
            <person name="Perrin A."/>
            <person name="Pettersson B."/>
            <person name="Poch O."/>
            <person name="Pohl T.M."/>
            <person name="Poirey R."/>
            <person name="Portetelle D."/>
            <person name="Pujol A."/>
            <person name="Purnelle B."/>
            <person name="Ramezani Rad M."/>
            <person name="Rechmann S."/>
            <person name="Schwager C."/>
            <person name="Schweizer M."/>
            <person name="Sor F."/>
            <person name="Sterky F."/>
            <person name="Tarassov I.A."/>
            <person name="Teodoru C."/>
            <person name="Tettelin H."/>
            <person name="Thierry A."/>
            <person name="Tobiasch E."/>
            <person name="Tzermia M."/>
            <person name="Uhlen M."/>
            <person name="Unseld M."/>
            <person name="Valens M."/>
            <person name="Vandenbol M."/>
            <person name="Vetter I."/>
            <person name="Vlcek C."/>
            <person name="Voet M."/>
            <person name="Volckaert G."/>
            <person name="Voss H."/>
            <person name="Wambutt R."/>
            <person name="Wedler H."/>
            <person name="Wiemann S."/>
            <person name="Winsor B."/>
            <person name="Wolfe K.H."/>
            <person name="Zollner A."/>
            <person name="Zumstein E."/>
            <person name="Kleine K."/>
        </authorList>
    </citation>
    <scope>NUCLEOTIDE SEQUENCE [LARGE SCALE GENOMIC DNA]</scope>
    <source>
        <strain>ATCC 204508 / S288c</strain>
    </source>
</reference>
<reference key="2">
    <citation type="journal article" date="2014" name="G3 (Bethesda)">
        <title>The reference genome sequence of Saccharomyces cerevisiae: Then and now.</title>
        <authorList>
            <person name="Engel S.R."/>
            <person name="Dietrich F.S."/>
            <person name="Fisk D.G."/>
            <person name="Binkley G."/>
            <person name="Balakrishnan R."/>
            <person name="Costanzo M.C."/>
            <person name="Dwight S.S."/>
            <person name="Hitz B.C."/>
            <person name="Karra K."/>
            <person name="Nash R.S."/>
            <person name="Weng S."/>
            <person name="Wong E.D."/>
            <person name="Lloyd P."/>
            <person name="Skrzypek M.S."/>
            <person name="Miyasato S.R."/>
            <person name="Simison M."/>
            <person name="Cherry J.M."/>
        </authorList>
    </citation>
    <scope>GENOME REANNOTATION</scope>
    <source>
        <strain>ATCC 204508 / S288c</strain>
    </source>
</reference>
<reference key="3">
    <citation type="journal article" date="1995" name="Yeast">
        <title>Sequence analysis of the right end of chromosome XV in Saccharomyces cerevisiae: an insight into the structural and functional significance of sub-telomeric repeat sequences.</title>
        <authorList>
            <person name="Pryde F.E."/>
            <person name="Huckle T.C."/>
            <person name="Louis E.J."/>
        </authorList>
    </citation>
    <scope>NUCLEOTIDE SEQUENCE [GENOMIC DNA] OF 120-437</scope>
    <source>
        <strain>ATCC 90839 / S288c / YP1</strain>
    </source>
</reference>
<evidence type="ECO:0000250" key="1"/>
<evidence type="ECO:0000305" key="2"/>
<comment type="catalytic activity">
    <reaction>
        <text>(2R)-2-phosphoglycerate = phosphoenolpyruvate + H2O</text>
        <dbReference type="Rhea" id="RHEA:10164"/>
        <dbReference type="ChEBI" id="CHEBI:15377"/>
        <dbReference type="ChEBI" id="CHEBI:58289"/>
        <dbReference type="ChEBI" id="CHEBI:58702"/>
        <dbReference type="EC" id="4.2.1.11"/>
    </reaction>
</comment>
<comment type="cofactor">
    <cofactor evidence="1">
        <name>Mg(2+)</name>
        <dbReference type="ChEBI" id="CHEBI:18420"/>
    </cofactor>
</comment>
<comment type="pathway">
    <text>Carbohydrate degradation; glycolysis; pyruvate from D-glyceraldehyde 3-phosphate: step 4/5.</text>
</comment>
<comment type="similarity">
    <text evidence="2">Belongs to the enolase family.</text>
</comment>
<protein>
    <recommendedName>
        <fullName>Enolase-related protein 1</fullName>
        <ecNumber>4.2.1.11</ecNumber>
    </recommendedName>
    <alternativeName>
        <fullName>2-phospho-D-glycerate hydro-lyase</fullName>
    </alternativeName>
    <alternativeName>
        <fullName>2-phosphoglycerate dehydratase</fullName>
    </alternativeName>
</protein>
<name>ERR1_YEAST</name>